<organism>
    <name type="scientific">Helicobacter pylori (strain P12)</name>
    <dbReference type="NCBI Taxonomy" id="570508"/>
    <lineage>
        <taxon>Bacteria</taxon>
        <taxon>Pseudomonadati</taxon>
        <taxon>Campylobacterota</taxon>
        <taxon>Epsilonproteobacteria</taxon>
        <taxon>Campylobacterales</taxon>
        <taxon>Helicobacteraceae</taxon>
        <taxon>Helicobacter</taxon>
    </lineage>
</organism>
<accession>B6JNQ5</accession>
<gene>
    <name evidence="1" type="primary">queF</name>
    <name type="ordered locus">HPP12_1385</name>
</gene>
<evidence type="ECO:0000255" key="1">
    <source>
        <dbReference type="HAMAP-Rule" id="MF_00818"/>
    </source>
</evidence>
<comment type="function">
    <text evidence="1">Catalyzes the NADPH-dependent reduction of 7-cyano-7-deazaguanine (preQ0) to 7-aminomethyl-7-deazaguanine (preQ1).</text>
</comment>
<comment type="catalytic activity">
    <reaction evidence="1">
        <text>7-aminomethyl-7-carbaguanine + 2 NADP(+) = 7-cyano-7-deazaguanine + 2 NADPH + 3 H(+)</text>
        <dbReference type="Rhea" id="RHEA:13409"/>
        <dbReference type="ChEBI" id="CHEBI:15378"/>
        <dbReference type="ChEBI" id="CHEBI:45075"/>
        <dbReference type="ChEBI" id="CHEBI:57783"/>
        <dbReference type="ChEBI" id="CHEBI:58349"/>
        <dbReference type="ChEBI" id="CHEBI:58703"/>
        <dbReference type="EC" id="1.7.1.13"/>
    </reaction>
</comment>
<comment type="pathway">
    <text evidence="1">tRNA modification; tRNA-queuosine biosynthesis.</text>
</comment>
<comment type="subcellular location">
    <subcellularLocation>
        <location evidence="1">Cytoplasm</location>
    </subcellularLocation>
</comment>
<comment type="similarity">
    <text evidence="1">Belongs to the GTP cyclohydrolase I family. QueF type 1 subfamily.</text>
</comment>
<name>QUEF_HELP2</name>
<dbReference type="EC" id="1.7.1.13" evidence="1"/>
<dbReference type="EMBL" id="CP001217">
    <property type="protein sequence ID" value="ACJ08533.1"/>
    <property type="molecule type" value="Genomic_DNA"/>
</dbReference>
<dbReference type="SMR" id="B6JNQ5"/>
<dbReference type="KEGG" id="hpp:HPP12_1385"/>
<dbReference type="HOGENOM" id="CLU_102489_0_1_7"/>
<dbReference type="UniPathway" id="UPA00392"/>
<dbReference type="Proteomes" id="UP000008198">
    <property type="component" value="Chromosome"/>
</dbReference>
<dbReference type="GO" id="GO:0005737">
    <property type="term" value="C:cytoplasm"/>
    <property type="evidence" value="ECO:0007669"/>
    <property type="project" value="UniProtKB-SubCell"/>
</dbReference>
<dbReference type="GO" id="GO:0033739">
    <property type="term" value="F:preQ1 synthase activity"/>
    <property type="evidence" value="ECO:0007669"/>
    <property type="project" value="UniProtKB-UniRule"/>
</dbReference>
<dbReference type="GO" id="GO:0008616">
    <property type="term" value="P:queuosine biosynthetic process"/>
    <property type="evidence" value="ECO:0007669"/>
    <property type="project" value="UniProtKB-UniRule"/>
</dbReference>
<dbReference type="GO" id="GO:0006400">
    <property type="term" value="P:tRNA modification"/>
    <property type="evidence" value="ECO:0007669"/>
    <property type="project" value="UniProtKB-UniRule"/>
</dbReference>
<dbReference type="Gene3D" id="3.30.1130.10">
    <property type="match status" value="1"/>
</dbReference>
<dbReference type="HAMAP" id="MF_00818">
    <property type="entry name" value="QueF_type1"/>
    <property type="match status" value="1"/>
</dbReference>
<dbReference type="InterPro" id="IPR043133">
    <property type="entry name" value="GTP-CH-I_C/QueF"/>
</dbReference>
<dbReference type="InterPro" id="IPR050084">
    <property type="entry name" value="NADPH_dep_7-cyano-7-deazaG_red"/>
</dbReference>
<dbReference type="InterPro" id="IPR029500">
    <property type="entry name" value="QueF"/>
</dbReference>
<dbReference type="InterPro" id="IPR016856">
    <property type="entry name" value="QueF_type1"/>
</dbReference>
<dbReference type="NCBIfam" id="TIGR03139">
    <property type="entry name" value="QueF-II"/>
    <property type="match status" value="1"/>
</dbReference>
<dbReference type="PANTHER" id="PTHR34354">
    <property type="entry name" value="NADPH-DEPENDENT 7-CYANO-7-DEAZAGUANINE REDUCTASE"/>
    <property type="match status" value="1"/>
</dbReference>
<dbReference type="PANTHER" id="PTHR34354:SF1">
    <property type="entry name" value="NADPH-DEPENDENT 7-CYANO-7-DEAZAGUANINE REDUCTASE"/>
    <property type="match status" value="1"/>
</dbReference>
<dbReference type="Pfam" id="PF14489">
    <property type="entry name" value="QueF"/>
    <property type="match status" value="1"/>
</dbReference>
<dbReference type="PIRSF" id="PIRSF027377">
    <property type="entry name" value="Nitrile_oxidored_QueF"/>
    <property type="match status" value="1"/>
</dbReference>
<dbReference type="SUPFAM" id="SSF55620">
    <property type="entry name" value="Tetrahydrobiopterin biosynthesis enzymes-like"/>
    <property type="match status" value="1"/>
</dbReference>
<reference key="1">
    <citation type="submission" date="2008-10" db="EMBL/GenBank/DDBJ databases">
        <title>The complete genome sequence of Helicobacter pylori strain P12.</title>
        <authorList>
            <person name="Fischer W."/>
            <person name="Windhager L."/>
            <person name="Karnholz A."/>
            <person name="Zeiller M."/>
            <person name="Zimmer R."/>
            <person name="Haas R."/>
        </authorList>
    </citation>
    <scope>NUCLEOTIDE SEQUENCE [LARGE SCALE GENOMIC DNA]</scope>
    <source>
        <strain>P12</strain>
    </source>
</reference>
<sequence length="148" mass="17034">MTPELNLKSLGAKTPYIFEYNSQLLEAFPNPNPNLDPLITLECKEFTSLCPITSQPDFGVIFIRYIPKDKMVESKSLKLYLFSYRNHGSFHESCINTILLDLVRLLEPKYLEVYGDFASRGGIAIKPFVNYAIKEYQGFKEKRLLNAK</sequence>
<proteinExistence type="inferred from homology"/>
<protein>
    <recommendedName>
        <fullName evidence="1">NADPH-dependent 7-cyano-7-deazaguanine reductase</fullName>
        <ecNumber evidence="1">1.7.1.13</ecNumber>
    </recommendedName>
    <alternativeName>
        <fullName evidence="1">7-cyano-7-carbaguanine reductase</fullName>
    </alternativeName>
    <alternativeName>
        <fullName evidence="1">NADPH-dependent nitrile oxidoreductase</fullName>
    </alternativeName>
    <alternativeName>
        <fullName evidence="1">PreQ(0) reductase</fullName>
    </alternativeName>
</protein>
<feature type="chain" id="PRO_1000134303" description="NADPH-dependent 7-cyano-7-deazaguanine reductase">
    <location>
        <begin position="1"/>
        <end position="148"/>
    </location>
</feature>
<feature type="active site" description="Thioimide intermediate" evidence="1">
    <location>
        <position position="50"/>
    </location>
</feature>
<feature type="active site" description="Proton donor" evidence="1">
    <location>
        <position position="57"/>
    </location>
</feature>
<feature type="binding site" evidence="1">
    <location>
        <begin position="72"/>
        <end position="74"/>
    </location>
    <ligand>
        <name>substrate</name>
    </ligand>
</feature>
<feature type="binding site" evidence="1">
    <location>
        <begin position="91"/>
        <end position="92"/>
    </location>
    <ligand>
        <name>substrate</name>
    </ligand>
</feature>
<keyword id="KW-0963">Cytoplasm</keyword>
<keyword id="KW-0521">NADP</keyword>
<keyword id="KW-0560">Oxidoreductase</keyword>
<keyword id="KW-0671">Queuosine biosynthesis</keyword>